<protein>
    <recommendedName>
        <fullName evidence="2">Large ribosomal subunit protein uL22c</fullName>
    </recommendedName>
    <alternativeName>
        <fullName>50S ribosomal protein L22, chloroplastic</fullName>
    </alternativeName>
</protein>
<proteinExistence type="inferred from homology"/>
<organism>
    <name type="scientific">Helianthus annuus</name>
    <name type="common">Common sunflower</name>
    <dbReference type="NCBI Taxonomy" id="4232"/>
    <lineage>
        <taxon>Eukaryota</taxon>
        <taxon>Viridiplantae</taxon>
        <taxon>Streptophyta</taxon>
        <taxon>Embryophyta</taxon>
        <taxon>Tracheophyta</taxon>
        <taxon>Spermatophyta</taxon>
        <taxon>Magnoliopsida</taxon>
        <taxon>eudicotyledons</taxon>
        <taxon>Gunneridae</taxon>
        <taxon>Pentapetalae</taxon>
        <taxon>asterids</taxon>
        <taxon>campanulids</taxon>
        <taxon>Asterales</taxon>
        <taxon>Asteraceae</taxon>
        <taxon>Asteroideae</taxon>
        <taxon>Heliantheae alliance</taxon>
        <taxon>Heliantheae</taxon>
        <taxon>Helianthus</taxon>
    </lineage>
</organism>
<dbReference type="EMBL" id="DQ383815">
    <property type="protein sequence ID" value="ABD47185.1"/>
    <property type="molecule type" value="Genomic_DNA"/>
</dbReference>
<dbReference type="RefSeq" id="YP_588157.1">
    <property type="nucleotide sequence ID" value="NC_007977.1"/>
</dbReference>
<dbReference type="SMR" id="Q1KXR9"/>
<dbReference type="GeneID" id="4055680"/>
<dbReference type="KEGG" id="han:4055680"/>
<dbReference type="OrthoDB" id="1840754at2759"/>
<dbReference type="GO" id="GO:0009507">
    <property type="term" value="C:chloroplast"/>
    <property type="evidence" value="ECO:0007669"/>
    <property type="project" value="UniProtKB-SubCell"/>
</dbReference>
<dbReference type="GO" id="GO:0015934">
    <property type="term" value="C:large ribosomal subunit"/>
    <property type="evidence" value="ECO:0007669"/>
    <property type="project" value="InterPro"/>
</dbReference>
<dbReference type="GO" id="GO:0019843">
    <property type="term" value="F:rRNA binding"/>
    <property type="evidence" value="ECO:0007669"/>
    <property type="project" value="UniProtKB-UniRule"/>
</dbReference>
<dbReference type="GO" id="GO:0003735">
    <property type="term" value="F:structural constituent of ribosome"/>
    <property type="evidence" value="ECO:0007669"/>
    <property type="project" value="InterPro"/>
</dbReference>
<dbReference type="GO" id="GO:0006412">
    <property type="term" value="P:translation"/>
    <property type="evidence" value="ECO:0007669"/>
    <property type="project" value="UniProtKB-UniRule"/>
</dbReference>
<dbReference type="CDD" id="cd00336">
    <property type="entry name" value="Ribosomal_L22"/>
    <property type="match status" value="1"/>
</dbReference>
<dbReference type="FunFam" id="3.90.470.10:FF:000006">
    <property type="entry name" value="50S ribosomal protein L22, chloroplastic"/>
    <property type="match status" value="1"/>
</dbReference>
<dbReference type="Gene3D" id="3.90.470.10">
    <property type="entry name" value="Ribosomal protein L22/L17"/>
    <property type="match status" value="1"/>
</dbReference>
<dbReference type="HAMAP" id="MF_01331_B">
    <property type="entry name" value="Ribosomal_uL22_B"/>
    <property type="match status" value="1"/>
</dbReference>
<dbReference type="InterPro" id="IPR001063">
    <property type="entry name" value="Ribosomal_uL22"/>
</dbReference>
<dbReference type="InterPro" id="IPR005727">
    <property type="entry name" value="Ribosomal_uL22_bac/chlpt-type"/>
</dbReference>
<dbReference type="InterPro" id="IPR047867">
    <property type="entry name" value="Ribosomal_uL22_bac/org-type"/>
</dbReference>
<dbReference type="InterPro" id="IPR018260">
    <property type="entry name" value="Ribosomal_uL22_CS"/>
</dbReference>
<dbReference type="InterPro" id="IPR036394">
    <property type="entry name" value="Ribosomal_uL22_sf"/>
</dbReference>
<dbReference type="NCBIfam" id="TIGR01044">
    <property type="entry name" value="rplV_bact"/>
    <property type="match status" value="1"/>
</dbReference>
<dbReference type="PANTHER" id="PTHR13501">
    <property type="entry name" value="CHLOROPLAST 50S RIBOSOMAL PROTEIN L22-RELATED"/>
    <property type="match status" value="1"/>
</dbReference>
<dbReference type="PANTHER" id="PTHR13501:SF10">
    <property type="entry name" value="LARGE RIBOSOMAL SUBUNIT PROTEIN UL22M"/>
    <property type="match status" value="1"/>
</dbReference>
<dbReference type="Pfam" id="PF00237">
    <property type="entry name" value="Ribosomal_L22"/>
    <property type="match status" value="1"/>
</dbReference>
<dbReference type="SUPFAM" id="SSF54843">
    <property type="entry name" value="Ribosomal protein L22"/>
    <property type="match status" value="1"/>
</dbReference>
<dbReference type="PROSITE" id="PS00464">
    <property type="entry name" value="RIBOSOMAL_L22"/>
    <property type="match status" value="1"/>
</dbReference>
<reference key="1">
    <citation type="submission" date="2006-01" db="EMBL/GenBank/DDBJ databases">
        <title>A comparison of the first two published chloroplast genomes in Asteraceae: Lactuca and Helianthus.</title>
        <authorList>
            <person name="Timme R.E."/>
            <person name="Kuehl J.V."/>
            <person name="Boore J.L."/>
            <person name="Jansen R.K."/>
        </authorList>
    </citation>
    <scope>NUCLEOTIDE SEQUENCE [LARGE SCALE GENOMIC DNA]</scope>
    <source>
        <strain>cv. HA383</strain>
    </source>
</reference>
<feature type="chain" id="PRO_0000243238" description="Large ribosomal subunit protein uL22c">
    <location>
        <begin position="1"/>
        <end position="154"/>
    </location>
</feature>
<name>RK22_HELAN</name>
<sequence>MLNKRTTEVYALGQHISMSAHKARRVIDQIRGRSYEETLMILELMPYRACYPIFKLVYSAAANASSNMGSNEANLVISKAEVNKGTIMKRLKPRARGRSFAIQKPTCHITIVMKDISLDEYIDTDSIAWSQNKKKDTTMSYYDMYSNGGTWDKK</sequence>
<geneLocation type="chloroplast"/>
<comment type="function">
    <text evidence="1">This protein binds specifically to 23S rRNA.</text>
</comment>
<comment type="function">
    <text evidence="1">The globular domain of the protein is located near the polypeptide exit tunnel on the outside of the subunit, while an extended beta-hairpin is found that lines the wall of the exit tunnel in the center of the 70S ribosome.</text>
</comment>
<comment type="subunit">
    <text evidence="1">Part of the 50S ribosomal subunit.</text>
</comment>
<comment type="subcellular location">
    <subcellularLocation>
        <location>Plastid</location>
        <location>Chloroplast</location>
    </subcellularLocation>
</comment>
<comment type="similarity">
    <text evidence="2">Belongs to the universal ribosomal protein uL22 family.</text>
</comment>
<gene>
    <name type="primary">rpl22</name>
</gene>
<accession>Q1KXR9</accession>
<evidence type="ECO:0000250" key="1"/>
<evidence type="ECO:0000305" key="2"/>
<keyword id="KW-0150">Chloroplast</keyword>
<keyword id="KW-0934">Plastid</keyword>
<keyword id="KW-0687">Ribonucleoprotein</keyword>
<keyword id="KW-0689">Ribosomal protein</keyword>
<keyword id="KW-0694">RNA-binding</keyword>
<keyword id="KW-0699">rRNA-binding</keyword>